<name>ENGB_BARQU</name>
<accession>Q6FZ15</accession>
<gene>
    <name evidence="1" type="primary">engB</name>
    <name type="ordered locus">BQ09790</name>
</gene>
<reference key="1">
    <citation type="journal article" date="2004" name="Proc. Natl. Acad. Sci. U.S.A.">
        <title>The louse-borne human pathogen Bartonella quintana is a genomic derivative of the zoonotic agent Bartonella henselae.</title>
        <authorList>
            <person name="Alsmark U.C.M."/>
            <person name="Frank A.C."/>
            <person name="Karlberg E.O."/>
            <person name="Legault B.-A."/>
            <person name="Ardell D.H."/>
            <person name="Canbaeck B."/>
            <person name="Eriksson A.-S."/>
            <person name="Naeslund A.K."/>
            <person name="Handley S.A."/>
            <person name="Huvet M."/>
            <person name="La Scola B."/>
            <person name="Holmberg M."/>
            <person name="Andersson S.G.E."/>
        </authorList>
    </citation>
    <scope>NUCLEOTIDE SEQUENCE [LARGE SCALE GENOMIC DNA]</scope>
    <source>
        <strain>Toulouse</strain>
    </source>
</reference>
<organism>
    <name type="scientific">Bartonella quintana (strain Toulouse)</name>
    <name type="common">Rochalimaea quintana</name>
    <dbReference type="NCBI Taxonomy" id="283165"/>
    <lineage>
        <taxon>Bacteria</taxon>
        <taxon>Pseudomonadati</taxon>
        <taxon>Pseudomonadota</taxon>
        <taxon>Alphaproteobacteria</taxon>
        <taxon>Hyphomicrobiales</taxon>
        <taxon>Bartonellaceae</taxon>
        <taxon>Bartonella</taxon>
    </lineage>
</organism>
<feature type="chain" id="PRO_0000266822" description="Probable GTP-binding protein EngB">
    <location>
        <begin position="1"/>
        <end position="215"/>
    </location>
</feature>
<feature type="domain" description="EngB-type G" evidence="1">
    <location>
        <begin position="31"/>
        <end position="215"/>
    </location>
</feature>
<feature type="binding site" evidence="1">
    <location>
        <begin position="39"/>
        <end position="46"/>
    </location>
    <ligand>
        <name>GTP</name>
        <dbReference type="ChEBI" id="CHEBI:37565"/>
    </ligand>
</feature>
<feature type="binding site" evidence="1">
    <location>
        <position position="46"/>
    </location>
    <ligand>
        <name>Mg(2+)</name>
        <dbReference type="ChEBI" id="CHEBI:18420"/>
    </ligand>
</feature>
<feature type="binding site" evidence="1">
    <location>
        <begin position="66"/>
        <end position="70"/>
    </location>
    <ligand>
        <name>GTP</name>
        <dbReference type="ChEBI" id="CHEBI:37565"/>
    </ligand>
</feature>
<feature type="binding site" evidence="1">
    <location>
        <position position="68"/>
    </location>
    <ligand>
        <name>Mg(2+)</name>
        <dbReference type="ChEBI" id="CHEBI:18420"/>
    </ligand>
</feature>
<feature type="binding site" evidence="1">
    <location>
        <begin position="93"/>
        <end position="96"/>
    </location>
    <ligand>
        <name>GTP</name>
        <dbReference type="ChEBI" id="CHEBI:37565"/>
    </ligand>
</feature>
<feature type="binding site" evidence="1">
    <location>
        <begin position="160"/>
        <end position="163"/>
    </location>
    <ligand>
        <name>GTP</name>
        <dbReference type="ChEBI" id="CHEBI:37565"/>
    </ligand>
</feature>
<feature type="binding site" evidence="1">
    <location>
        <begin position="194"/>
        <end position="196"/>
    </location>
    <ligand>
        <name>GTP</name>
        <dbReference type="ChEBI" id="CHEBI:37565"/>
    </ligand>
</feature>
<evidence type="ECO:0000255" key="1">
    <source>
        <dbReference type="HAMAP-Rule" id="MF_00321"/>
    </source>
</evidence>
<dbReference type="EMBL" id="BX897700">
    <property type="protein sequence ID" value="CAF26455.1"/>
    <property type="molecule type" value="Genomic_DNA"/>
</dbReference>
<dbReference type="SMR" id="Q6FZ15"/>
<dbReference type="KEGG" id="bqu:BQ09790"/>
<dbReference type="eggNOG" id="COG0218">
    <property type="taxonomic scope" value="Bacteria"/>
</dbReference>
<dbReference type="HOGENOM" id="CLU_033732_2_0_5"/>
<dbReference type="OrthoDB" id="9804921at2"/>
<dbReference type="Proteomes" id="UP000000597">
    <property type="component" value="Chromosome"/>
</dbReference>
<dbReference type="GO" id="GO:0005829">
    <property type="term" value="C:cytosol"/>
    <property type="evidence" value="ECO:0007669"/>
    <property type="project" value="TreeGrafter"/>
</dbReference>
<dbReference type="GO" id="GO:0005525">
    <property type="term" value="F:GTP binding"/>
    <property type="evidence" value="ECO:0007669"/>
    <property type="project" value="UniProtKB-UniRule"/>
</dbReference>
<dbReference type="GO" id="GO:0046872">
    <property type="term" value="F:metal ion binding"/>
    <property type="evidence" value="ECO:0007669"/>
    <property type="project" value="UniProtKB-KW"/>
</dbReference>
<dbReference type="GO" id="GO:0000917">
    <property type="term" value="P:division septum assembly"/>
    <property type="evidence" value="ECO:0007669"/>
    <property type="project" value="UniProtKB-KW"/>
</dbReference>
<dbReference type="CDD" id="cd01876">
    <property type="entry name" value="YihA_EngB"/>
    <property type="match status" value="1"/>
</dbReference>
<dbReference type="Gene3D" id="3.40.50.300">
    <property type="entry name" value="P-loop containing nucleotide triphosphate hydrolases"/>
    <property type="match status" value="1"/>
</dbReference>
<dbReference type="HAMAP" id="MF_00321">
    <property type="entry name" value="GTPase_EngB"/>
    <property type="match status" value="1"/>
</dbReference>
<dbReference type="InterPro" id="IPR030393">
    <property type="entry name" value="G_ENGB_dom"/>
</dbReference>
<dbReference type="InterPro" id="IPR006073">
    <property type="entry name" value="GTP-bd"/>
</dbReference>
<dbReference type="InterPro" id="IPR019987">
    <property type="entry name" value="GTP-bd_ribosome_bio_YsxC"/>
</dbReference>
<dbReference type="InterPro" id="IPR027417">
    <property type="entry name" value="P-loop_NTPase"/>
</dbReference>
<dbReference type="NCBIfam" id="TIGR03598">
    <property type="entry name" value="GTPase_YsxC"/>
    <property type="match status" value="1"/>
</dbReference>
<dbReference type="PANTHER" id="PTHR11649:SF13">
    <property type="entry name" value="ENGB-TYPE G DOMAIN-CONTAINING PROTEIN"/>
    <property type="match status" value="1"/>
</dbReference>
<dbReference type="PANTHER" id="PTHR11649">
    <property type="entry name" value="MSS1/TRME-RELATED GTP-BINDING PROTEIN"/>
    <property type="match status" value="1"/>
</dbReference>
<dbReference type="Pfam" id="PF01926">
    <property type="entry name" value="MMR_HSR1"/>
    <property type="match status" value="1"/>
</dbReference>
<dbReference type="SUPFAM" id="SSF52540">
    <property type="entry name" value="P-loop containing nucleoside triphosphate hydrolases"/>
    <property type="match status" value="1"/>
</dbReference>
<dbReference type="PROSITE" id="PS51706">
    <property type="entry name" value="G_ENGB"/>
    <property type="match status" value="1"/>
</dbReference>
<sequence>MTKYSSLSGIFSRKWIFIRGIPTIHFLPPEGPPEIAFAGRSNVGKSSLINALVQQKSLARTSNTPGRTQELNYFVPDGFSGEPGNLPPIALVDMPGYGFAEAPKNLVDAWTHLIFSYLRGRTTLKRVYVLIDSRHGIKKNDGDVLDLLDKAAVSYQIVLTKSDKTKSNELAKLIMITKTKLLKHPAAYPELLVTSSEKALGLEELRAAILQAIAV</sequence>
<comment type="function">
    <text evidence="1">Necessary for normal cell division and for the maintenance of normal septation.</text>
</comment>
<comment type="cofactor">
    <cofactor evidence="1">
        <name>Mg(2+)</name>
        <dbReference type="ChEBI" id="CHEBI:18420"/>
    </cofactor>
</comment>
<comment type="similarity">
    <text evidence="1">Belongs to the TRAFAC class TrmE-Era-EngA-EngB-Septin-like GTPase superfamily. EngB GTPase family.</text>
</comment>
<protein>
    <recommendedName>
        <fullName evidence="1">Probable GTP-binding protein EngB</fullName>
    </recommendedName>
</protein>
<keyword id="KW-0131">Cell cycle</keyword>
<keyword id="KW-0132">Cell division</keyword>
<keyword id="KW-0342">GTP-binding</keyword>
<keyword id="KW-0460">Magnesium</keyword>
<keyword id="KW-0479">Metal-binding</keyword>
<keyword id="KW-0547">Nucleotide-binding</keyword>
<keyword id="KW-0717">Septation</keyword>
<proteinExistence type="inferred from homology"/>